<reference key="1">
    <citation type="journal article" date="2005" name="J. Bacteriol.">
        <title>Completion of the genome sequence of Brucella abortus and comparison to the highly similar genomes of Brucella melitensis and Brucella suis.</title>
        <authorList>
            <person name="Halling S.M."/>
            <person name="Peterson-Burch B.D."/>
            <person name="Bricker B.J."/>
            <person name="Zuerner R.L."/>
            <person name="Qing Z."/>
            <person name="Li L.-L."/>
            <person name="Kapur V."/>
            <person name="Alt D.P."/>
            <person name="Olsen S.C."/>
        </authorList>
    </citation>
    <scope>NUCLEOTIDE SEQUENCE [LARGE SCALE GENOMIC DNA]</scope>
    <source>
        <strain>9-941</strain>
    </source>
</reference>
<dbReference type="EC" id="3.5.1.5" evidence="1"/>
<dbReference type="EMBL" id="AE017223">
    <property type="protein sequence ID" value="AAX74685.1"/>
    <property type="molecule type" value="Genomic_DNA"/>
</dbReference>
<dbReference type="RefSeq" id="WP_002964470.1">
    <property type="nucleotide sequence ID" value="NC_006932.1"/>
</dbReference>
<dbReference type="SMR" id="Q57CE9"/>
<dbReference type="EnsemblBacteria" id="AAX74685">
    <property type="protein sequence ID" value="AAX74685"/>
    <property type="gene ID" value="BruAb1_1354"/>
</dbReference>
<dbReference type="KEGG" id="bmb:BruAb1_1354"/>
<dbReference type="HOGENOM" id="CLU_129707_2_0_5"/>
<dbReference type="UniPathway" id="UPA00258">
    <property type="reaction ID" value="UER00370"/>
</dbReference>
<dbReference type="Proteomes" id="UP000000540">
    <property type="component" value="Chromosome I"/>
</dbReference>
<dbReference type="GO" id="GO:0035550">
    <property type="term" value="C:urease complex"/>
    <property type="evidence" value="ECO:0007669"/>
    <property type="project" value="InterPro"/>
</dbReference>
<dbReference type="GO" id="GO:0009039">
    <property type="term" value="F:urease activity"/>
    <property type="evidence" value="ECO:0007669"/>
    <property type="project" value="UniProtKB-UniRule"/>
</dbReference>
<dbReference type="GO" id="GO:0043419">
    <property type="term" value="P:urea catabolic process"/>
    <property type="evidence" value="ECO:0007669"/>
    <property type="project" value="UniProtKB-UniRule"/>
</dbReference>
<dbReference type="CDD" id="cd00407">
    <property type="entry name" value="Urease_beta"/>
    <property type="match status" value="1"/>
</dbReference>
<dbReference type="FunFam" id="2.10.150.10:FF:000001">
    <property type="entry name" value="Urease subunit beta"/>
    <property type="match status" value="1"/>
</dbReference>
<dbReference type="Gene3D" id="2.10.150.10">
    <property type="entry name" value="Urease, beta subunit"/>
    <property type="match status" value="1"/>
</dbReference>
<dbReference type="HAMAP" id="MF_01954">
    <property type="entry name" value="Urease_beta"/>
    <property type="match status" value="1"/>
</dbReference>
<dbReference type="InterPro" id="IPR002019">
    <property type="entry name" value="Urease_beta-like"/>
</dbReference>
<dbReference type="InterPro" id="IPR036461">
    <property type="entry name" value="Urease_betasu_sf"/>
</dbReference>
<dbReference type="InterPro" id="IPR050069">
    <property type="entry name" value="Urease_subunit"/>
</dbReference>
<dbReference type="NCBIfam" id="NF009682">
    <property type="entry name" value="PRK13203.1"/>
    <property type="match status" value="1"/>
</dbReference>
<dbReference type="NCBIfam" id="TIGR00192">
    <property type="entry name" value="urease_beta"/>
    <property type="match status" value="1"/>
</dbReference>
<dbReference type="PANTHER" id="PTHR33569">
    <property type="entry name" value="UREASE"/>
    <property type="match status" value="1"/>
</dbReference>
<dbReference type="PANTHER" id="PTHR33569:SF1">
    <property type="entry name" value="UREASE"/>
    <property type="match status" value="1"/>
</dbReference>
<dbReference type="Pfam" id="PF00699">
    <property type="entry name" value="Urease_beta"/>
    <property type="match status" value="1"/>
</dbReference>
<dbReference type="SUPFAM" id="SSF51278">
    <property type="entry name" value="Urease, beta-subunit"/>
    <property type="match status" value="1"/>
</dbReference>
<protein>
    <recommendedName>
        <fullName evidence="1">Urease subunit beta 2</fullName>
        <ecNumber evidence="1">3.5.1.5</ecNumber>
    </recommendedName>
    <alternativeName>
        <fullName evidence="1">Urea amidohydrolase subunit beta 2</fullName>
    </alternativeName>
</protein>
<name>URE22_BRUAB</name>
<feature type="chain" id="PRO_0000234233" description="Urease subunit beta 2">
    <location>
        <begin position="1"/>
        <end position="159"/>
    </location>
</feature>
<feature type="region of interest" description="Disordered" evidence="2">
    <location>
        <begin position="1"/>
        <end position="23"/>
    </location>
</feature>
<organism>
    <name type="scientific">Brucella abortus biovar 1 (strain 9-941)</name>
    <dbReference type="NCBI Taxonomy" id="262698"/>
    <lineage>
        <taxon>Bacteria</taxon>
        <taxon>Pseudomonadati</taxon>
        <taxon>Pseudomonadota</taxon>
        <taxon>Alphaproteobacteria</taxon>
        <taxon>Hyphomicrobiales</taxon>
        <taxon>Brucellaceae</taxon>
        <taxon>Brucella/Ochrobactrum group</taxon>
        <taxon>Brucella</taxon>
    </lineage>
</organism>
<comment type="catalytic activity">
    <reaction evidence="1">
        <text>urea + 2 H2O + H(+) = hydrogencarbonate + 2 NH4(+)</text>
        <dbReference type="Rhea" id="RHEA:20557"/>
        <dbReference type="ChEBI" id="CHEBI:15377"/>
        <dbReference type="ChEBI" id="CHEBI:15378"/>
        <dbReference type="ChEBI" id="CHEBI:16199"/>
        <dbReference type="ChEBI" id="CHEBI:17544"/>
        <dbReference type="ChEBI" id="CHEBI:28938"/>
        <dbReference type="EC" id="3.5.1.5"/>
    </reaction>
</comment>
<comment type="pathway">
    <text evidence="1">Nitrogen metabolism; urea degradation; CO(2) and NH(3) from urea (urease route): step 1/1.</text>
</comment>
<comment type="subunit">
    <text evidence="1">Heterotrimer of UreA (gamma), UreB (beta) and UreC (alpha) subunits. Three heterotrimers associate to form the active enzyme.</text>
</comment>
<comment type="subcellular location">
    <subcellularLocation>
        <location evidence="1">Cytoplasm</location>
    </subcellularLocation>
</comment>
<comment type="similarity">
    <text evidence="1">Belongs to the urease beta subunit family.</text>
</comment>
<evidence type="ECO:0000255" key="1">
    <source>
        <dbReference type="HAMAP-Rule" id="MF_01954"/>
    </source>
</evidence>
<evidence type="ECO:0000256" key="2">
    <source>
        <dbReference type="SAM" id="MobiDB-lite"/>
    </source>
</evidence>
<accession>Q57CE9</accession>
<proteinExistence type="inferred from homology"/>
<sequence>MAKEPTEAAHPQPEQTKTNHKAHRPVGGYVLAKDPIEINQGRPRTTLTVRNTGDRPIQIGSHFHFFEVNRYLEFDRSKAFGLRLDIPANTAVRFEPGDEKEVTLVPFAGKRFIFGFNNLVDGWSGDGPTPDYQPNREIAAERAEKLGFKSCKSGGKDAK</sequence>
<keyword id="KW-0963">Cytoplasm</keyword>
<keyword id="KW-0378">Hydrolase</keyword>
<gene>
    <name evidence="1" type="primary">ureB2</name>
    <name type="ordered locus">BruAb1_1354</name>
</gene>